<evidence type="ECO:0000250" key="1">
    <source>
        <dbReference type="UniProtKB" id="P37569"/>
    </source>
</evidence>
<evidence type="ECO:0000255" key="2">
    <source>
        <dbReference type="PROSITE-ProRule" id="PRU00217"/>
    </source>
</evidence>
<evidence type="ECO:0000269" key="3">
    <source>
    </source>
</evidence>
<evidence type="ECO:0000303" key="4">
    <source>
    </source>
</evidence>
<evidence type="ECO:0000305" key="5"/>
<evidence type="ECO:0000305" key="6">
    <source>
    </source>
</evidence>
<evidence type="ECO:0000312" key="7">
    <source>
        <dbReference type="EMBL" id="ABD29652.1"/>
    </source>
</evidence>
<evidence type="ECO:0007829" key="8">
    <source>
        <dbReference type="PDB" id="8GQD"/>
    </source>
</evidence>
<proteinExistence type="evidence at protein level"/>
<organism>
    <name type="scientific">Staphylococcus aureus (strain NCTC 8325 / PS 47)</name>
    <dbReference type="NCBI Taxonomy" id="93061"/>
    <lineage>
        <taxon>Bacteria</taxon>
        <taxon>Bacillati</taxon>
        <taxon>Bacillota</taxon>
        <taxon>Bacilli</taxon>
        <taxon>Bacillales</taxon>
        <taxon>Staphylococcaceae</taxon>
        <taxon>Staphylococcus</taxon>
    </lineage>
</organism>
<comment type="function">
    <text evidence="1 3">Activates the phosphorylation activity of the protein-arginine kinase McsB (By similarity). May function as an important molecule for oxidative tolerance in various types of stress including that of heavy metals. Binds to Cu(2+), Zn(2+), Co(2+) and Cd(2+) via its CXXC metal binding motifs (PubMed:22126623).</text>
</comment>
<comment type="subunit">
    <text evidence="3">Interacts with McsB and CtsR; the CXXC motifs are needed for the binding.</text>
</comment>
<comment type="induction">
    <text evidence="3">Up-regulated by heavy metals such as Cu(2+) and Cd(2+), but Zn(2+) and Co(2+) have no effect. Forms part of an operon with ctsR, mcsB and clpC, which is repressed by CtsR.</text>
</comment>
<comment type="miscellaneous">
    <text evidence="3">The mutant where Cys residues of three CXXC motifs are mutated to Ala (Cys-3, Cys-6, Cys-29, Cys-32, Cys-105 and Cys-108) is still able to bind Cu(2+), probably via its fourth CXXC motif, but loses the ability to bind Zn(2+), Co(2+) and Cd(2+).</text>
</comment>
<comment type="sequence caution" evidence="5">
    <conflict type="erroneous initiation">
        <sequence resource="EMBL-CDS" id="ABD29652"/>
    </conflict>
    <text>Truncated N-terminus.</text>
</comment>
<keyword id="KW-0002">3D-structure</keyword>
<keyword id="KW-0479">Metal-binding</keyword>
<keyword id="KW-1185">Reference proteome</keyword>
<keyword id="KW-0346">Stress response</keyword>
<keyword id="KW-0862">Zinc</keyword>
<gene>
    <name evidence="4" type="primary">mcsA</name>
    <name evidence="7" type="ordered locus">SAOUHSC_00503</name>
</gene>
<accession>Q2G0P7</accession>
<protein>
    <recommendedName>
        <fullName evidence="1">Protein-arginine kinase activator protein</fullName>
    </recommendedName>
</protein>
<name>MCSA_STAA8</name>
<sequence length="188" mass="21703">MLCENCQLNEAELKVKVTSKNKTEEKMVCQTCAEGHHPWNQANEQPEYQEHQDNFEEAFVVKQILQHLATKHGINFQEVAFKEEKRCPSCHMTLKDIAHVGKFGCANCYATFKDDIIDIVRRVQGGQFEHVGKTPHSSHKKIALKRKIEEKNEYLKKLIEIQDFEEAAIVRDEIKALKAESEVQHDDA</sequence>
<dbReference type="EMBL" id="CP000253">
    <property type="protein sequence ID" value="ABD29652.1"/>
    <property type="status" value="ALT_INIT"/>
    <property type="molecule type" value="Genomic_DNA"/>
</dbReference>
<dbReference type="RefSeq" id="WP_000882069.1">
    <property type="nucleotide sequence ID" value="NZ_LS483365.1"/>
</dbReference>
<dbReference type="RefSeq" id="WP_011443618.1">
    <property type="nucleotide sequence ID" value="NC_007795.1"/>
</dbReference>
<dbReference type="RefSeq" id="YP_499076.1">
    <property type="nucleotide sequence ID" value="NC_007795.1"/>
</dbReference>
<dbReference type="PDB" id="8GQD">
    <property type="method" value="EM"/>
    <property type="resolution" value="3.41 A"/>
    <property type="chains" value="E/F/G/H=85-143"/>
</dbReference>
<dbReference type="PDBsum" id="8GQD"/>
<dbReference type="EMDB" id="EMD-34200"/>
<dbReference type="SMR" id="Q2G0P7"/>
<dbReference type="STRING" id="93061.SAOUHSC_00503"/>
<dbReference type="PaxDb" id="1280-SAXN108_0576"/>
<dbReference type="GeneID" id="3920415"/>
<dbReference type="KEGG" id="sao:SAOUHSC_00503"/>
<dbReference type="PATRIC" id="fig|93061.5.peg.450"/>
<dbReference type="eggNOG" id="COG3880">
    <property type="taxonomic scope" value="Bacteria"/>
</dbReference>
<dbReference type="HOGENOM" id="CLU_102553_0_0_9"/>
<dbReference type="OrthoDB" id="9788704at2"/>
<dbReference type="Proteomes" id="UP000008816">
    <property type="component" value="Chromosome"/>
</dbReference>
<dbReference type="GO" id="GO:0046870">
    <property type="term" value="F:cadmium ion binding"/>
    <property type="evidence" value="ECO:0000314"/>
    <property type="project" value="UniProtKB"/>
</dbReference>
<dbReference type="GO" id="GO:0050897">
    <property type="term" value="F:cobalt ion binding"/>
    <property type="evidence" value="ECO:0000314"/>
    <property type="project" value="UniProtKB"/>
</dbReference>
<dbReference type="GO" id="GO:0005507">
    <property type="term" value="F:copper ion binding"/>
    <property type="evidence" value="ECO:0000314"/>
    <property type="project" value="UniProtKB"/>
</dbReference>
<dbReference type="GO" id="GO:0003677">
    <property type="term" value="F:DNA binding"/>
    <property type="evidence" value="ECO:0007669"/>
    <property type="project" value="InterPro"/>
</dbReference>
<dbReference type="GO" id="GO:0008270">
    <property type="term" value="F:zinc ion binding"/>
    <property type="evidence" value="ECO:0000314"/>
    <property type="project" value="UniProtKB"/>
</dbReference>
<dbReference type="GO" id="GO:1990170">
    <property type="term" value="P:stress response to cadmium ion"/>
    <property type="evidence" value="ECO:0000314"/>
    <property type="project" value="UniProtKB"/>
</dbReference>
<dbReference type="GO" id="GO:1990169">
    <property type="term" value="P:stress response to copper ion"/>
    <property type="evidence" value="ECO:0000314"/>
    <property type="project" value="UniProtKB"/>
</dbReference>
<dbReference type="Gene3D" id="4.10.860.10">
    <property type="entry name" value="UVR domain"/>
    <property type="match status" value="1"/>
</dbReference>
<dbReference type="InterPro" id="IPR001943">
    <property type="entry name" value="UVR_dom"/>
</dbReference>
<dbReference type="InterPro" id="IPR025542">
    <property type="entry name" value="YacH"/>
</dbReference>
<dbReference type="InterPro" id="IPR001510">
    <property type="entry name" value="Znf_PARP"/>
</dbReference>
<dbReference type="PANTHER" id="PTHR38430">
    <property type="entry name" value="PROTEIN-ARGININE KINASE ACTIVATOR PROTEIN"/>
    <property type="match status" value="1"/>
</dbReference>
<dbReference type="PANTHER" id="PTHR38430:SF1">
    <property type="entry name" value="PROTEIN-ARGININE KINASE ACTIVATOR PROTEIN"/>
    <property type="match status" value="1"/>
</dbReference>
<dbReference type="Pfam" id="PF02151">
    <property type="entry name" value="UVR"/>
    <property type="match status" value="1"/>
</dbReference>
<dbReference type="PIRSF" id="PIRSF015034">
    <property type="entry name" value="YacH"/>
    <property type="match status" value="1"/>
</dbReference>
<dbReference type="PROSITE" id="PS50151">
    <property type="entry name" value="UVR"/>
    <property type="match status" value="1"/>
</dbReference>
<reference key="1">
    <citation type="book" date="2006" name="Gram positive pathogens, 2nd edition">
        <title>The Staphylococcus aureus NCTC 8325 genome.</title>
        <editorList>
            <person name="Fischetti V."/>
            <person name="Novick R."/>
            <person name="Ferretti J."/>
            <person name="Portnoy D."/>
            <person name="Rood J."/>
        </editorList>
        <authorList>
            <person name="Gillaspy A.F."/>
            <person name="Worrell V."/>
            <person name="Orvis J."/>
            <person name="Roe B.A."/>
            <person name="Dyer D.W."/>
            <person name="Iandolo J.J."/>
        </authorList>
    </citation>
    <scope>NUCLEOTIDE SEQUENCE [LARGE SCALE GENOMIC DNA]</scope>
    <source>
        <strain>NCTC 8325 / PS 47</strain>
    </source>
</reference>
<reference key="2">
    <citation type="journal article" date="2012" name="FEMS Microbiol. Lett.">
        <title>McsA and the roles of metal-binding motif in Staphylococcus aureus.</title>
        <authorList>
            <person name="Sitthisak S."/>
            <person name="Kitti T."/>
            <person name="Boonyonying K."/>
            <person name="Wozniak D."/>
            <person name="Mongkolsuk S."/>
            <person name="Jayaswal R.K."/>
        </authorList>
    </citation>
    <scope>FUNCTION</scope>
    <scope>INDUCTION</scope>
    <scope>INTERACTION WITH MCSB AND CTSR</scope>
    <scope>MUTAGENESIS</scope>
    <source>
        <strain>SH1000</strain>
    </source>
</reference>
<feature type="chain" id="PRO_0000433303" description="Protein-arginine kinase activator protein">
    <location>
        <begin position="1"/>
        <end position="188"/>
    </location>
</feature>
<feature type="domain" description="UVR" evidence="2">
    <location>
        <begin position="145"/>
        <end position="180"/>
    </location>
</feature>
<feature type="short sequence motif" description="CXXC metal binding motif 1" evidence="6">
    <location>
        <begin position="3"/>
        <end position="6"/>
    </location>
</feature>
<feature type="short sequence motif" description="CXXC metal binding motif 2" evidence="6">
    <location>
        <begin position="29"/>
        <end position="32"/>
    </location>
</feature>
<feature type="short sequence motif" description="CXXC metal binding motif 3" evidence="6">
    <location>
        <begin position="87"/>
        <end position="90"/>
    </location>
</feature>
<feature type="short sequence motif" description="CXXC metal binding motif 4" evidence="6">
    <location>
        <begin position="105"/>
        <end position="108"/>
    </location>
</feature>
<feature type="strand" evidence="8">
    <location>
        <begin position="88"/>
        <end position="90"/>
    </location>
</feature>
<feature type="helix" evidence="8">
    <location>
        <begin position="94"/>
        <end position="100"/>
    </location>
</feature>
<feature type="helix" evidence="8">
    <location>
        <begin position="106"/>
        <end position="123"/>
    </location>
</feature>
<feature type="helix" evidence="8">
    <location>
        <begin position="137"/>
        <end position="142"/>
    </location>
</feature>